<keyword id="KW-0244">Early protein</keyword>
<keyword id="KW-0325">Glycoprotein</keyword>
<keyword id="KW-1043">Host membrane</keyword>
<keyword id="KW-0472">Membrane</keyword>
<keyword id="KW-0597">Phosphoprotein</keyword>
<keyword id="KW-1185">Reference proteome</keyword>
<keyword id="KW-0732">Signal</keyword>
<keyword id="KW-0812">Transmembrane</keyword>
<keyword id="KW-1133">Transmembrane helix</keyword>
<comment type="function">
    <text>Prevents infected cell apoptosis induced by the host immune system. Acts by down-regulating a number of cell surface receptors in the tumor necrosis factor (TNF) receptor superfamily, namely FAS, TNFRSF10A/TRAIL receptor 1, and TNFRSF10B/TRAIL receptor 2. Down-regulation of these death receptors protects adenovirus-infected cells from apoptosis induced by the death receptor ligands Fas ligand and TRAIL. RID complex also down-regulates certain tyrosine kinase cell surface receptors, especially the epidermal growth factor receptor (EGFR). RID-mediated Fas and EGFR down-regulation occurs via endocytosis of the receptors into endosomes followed by transport to and degradation within lysosomes.</text>
</comment>
<comment type="subunit">
    <text>Interacts with E3 RID-alpha and E3 CR1-alpha.</text>
</comment>
<comment type="subcellular location">
    <subcellularLocation>
        <location evidence="5">Host membrane</location>
        <topology evidence="5">Single-pass type I membrane protein</topology>
    </subcellularLocation>
</comment>
<comment type="PTM">
    <text evidence="3">Phosphorylated on serine.</text>
</comment>
<comment type="PTM">
    <text evidence="4">O-glycosylated, but not N-glycosylated.</text>
</comment>
<comment type="similarity">
    <text evidence="6">Belongs to the adenoviridae E3_RID-beta family.</text>
</comment>
<dbReference type="EMBL" id="J01917">
    <property type="status" value="NOT_ANNOTATED_CDS"/>
    <property type="molecule type" value="Genomic_DNA"/>
</dbReference>
<dbReference type="PIR" id="A03820">
    <property type="entry name" value="ERAD52"/>
</dbReference>
<dbReference type="RefSeq" id="AP_000187.1">
    <property type="nucleotide sequence ID" value="AC_000007.1"/>
</dbReference>
<dbReference type="Proteomes" id="UP000008167">
    <property type="component" value="Segment"/>
</dbReference>
<dbReference type="GO" id="GO:0033644">
    <property type="term" value="C:host cell membrane"/>
    <property type="evidence" value="ECO:0007669"/>
    <property type="project" value="UniProtKB-SubCell"/>
</dbReference>
<dbReference type="GO" id="GO:0016020">
    <property type="term" value="C:membrane"/>
    <property type="evidence" value="ECO:0007669"/>
    <property type="project" value="UniProtKB-KW"/>
</dbReference>
<dbReference type="GO" id="GO:0009966">
    <property type="term" value="P:regulation of signal transduction"/>
    <property type="evidence" value="ECO:0007669"/>
    <property type="project" value="InterPro"/>
</dbReference>
<dbReference type="InterPro" id="IPR008131">
    <property type="entry name" value="Adeno_E3_14_5"/>
</dbReference>
<dbReference type="Pfam" id="PF04834">
    <property type="entry name" value="Adeno_E3_14_5"/>
    <property type="match status" value="1"/>
</dbReference>
<reference key="1">
    <citation type="journal article" date="1981" name="Nucleic Acids Res.">
        <title>Nucleotide sequence of the EcoRI E fragment of adenovirus 2 genome.</title>
        <authorList>
            <person name="Herisse J."/>
            <person name="Galibert F."/>
        </authorList>
    </citation>
    <scope>NUCLEOTIDE SEQUENCE [GENOMIC DNA]</scope>
</reference>
<reference key="2">
    <citation type="journal article" date="1990" name="Virology">
        <title>A 14,500 MW protein is coded by region E3 of group C human adenoviruses.</title>
        <authorList>
            <person name="Tollefson A.E."/>
            <person name="Krajcsi P."/>
            <person name="Pursley M.H."/>
            <person name="Gooding L.R."/>
            <person name="Wold W.S.M."/>
        </authorList>
    </citation>
    <scope>IDENTIFICATION OF PROTEIN</scope>
</reference>
<reference key="3">
    <citation type="journal article" date="1992" name="Virology">
        <title>The adenovirus E3-14.5K protein which is required for prevention of TNF cytolysis and for down-regulation of the EGF receptor contains phosphoserine.</title>
        <authorList>
            <person name="Krajcsi P."/>
            <person name="Wold W.S.M."/>
        </authorList>
    </citation>
    <scope>PHOSPHORYLATION</scope>
    <source>
        <strain>Human adenovirus C serotype 5</strain>
    </source>
</reference>
<reference key="4">
    <citation type="journal article" date="1992" name="Virology">
        <title>The E3-14.5K integral membrane protein of adenovirus that is required for down-regulation of the EGF receptor and for prevention of TNF cytolysis is O-glycosylated but not N-glycosylated.</title>
        <authorList>
            <person name="Krajcsi P."/>
            <person name="Tollefson A.E."/>
            <person name="Wold W.S.M."/>
        </authorList>
    </citation>
    <scope>GLYCOSYLATION</scope>
    <source>
        <strain>Human adenovirus C serotype 5</strain>
    </source>
</reference>
<reference key="5">
    <citation type="journal article" date="1992" name="J. Virol.">
        <title>The adenovirus E3 14.5-kilodalton protein, which is required for down-regulation of the epidermal growth factor receptor and prevention of tumor necrosis factor cytolysis, is an integral membrane protein oriented with its C-terminus in the cytoplasm.</title>
        <authorList>
            <person name="Krajcsi P."/>
            <person name="Tollefson A.E."/>
            <person name="Anderson C.W."/>
            <person name="Wold W.S.M."/>
        </authorList>
    </citation>
    <scope>TOPOLOGY</scope>
    <source>
        <strain>Human adenovirus C serotype 5</strain>
    </source>
</reference>
<reference key="6">
    <citation type="journal article" date="1995" name="J. Virol.">
        <title>The adenovirus E3 10.4K and 14.5K proteins, which function to prevent cytolysis by tumor necrosis factor and to down-regulate the epidermal growth factor receptor, are localized in the plasma membrane.</title>
        <authorList>
            <person name="Stewart A.R."/>
            <person name="Tollefson A.E."/>
            <person name="Krajcsi P."/>
            <person name="Yei S.P."/>
            <person name="Wold W.S."/>
        </authorList>
    </citation>
    <scope>SUBCELLULAR LOCATION</scope>
    <source>
        <strain>Human adenovirus C serotype 5</strain>
    </source>
</reference>
<reference key="7">
    <citation type="journal article" date="2002" name="J. Virol.">
        <title>Adenovirus RIDbeta subunit contains a tyrosine residue that is critical for RID-mediated receptor internalization and inhibition of Fas- and TRAIL-induced apoptosis.</title>
        <authorList>
            <person name="Lichtenstein D.L."/>
            <person name="Krajcsi P."/>
            <person name="Esteban D.J."/>
            <person name="Tollefson A.E."/>
            <person name="Wold W.S."/>
        </authorList>
    </citation>
    <scope>TYROSINE-BASED SORTING MOTIF</scope>
    <source>
        <strain>Human adenovirus C serotype 5</strain>
    </source>
</reference>
<reference key="8">
    <citation type="journal article" date="2004" name="Int. Rev. Immunol.">
        <title>Functions and mechanisms of action of the adenovirus E3 proteins.</title>
        <authorList>
            <person name="Lichtenstein D.L."/>
            <person name="Toth K."/>
            <person name="Doronin K."/>
            <person name="Tollefson A.E."/>
            <person name="Wold W.S."/>
        </authorList>
    </citation>
    <scope>REVIEW</scope>
</reference>
<reference key="9">
    <citation type="journal article" date="2004" name="Curr. Top. Microbiol. Immunol.">
        <title>Immune evasion by adenovirus E3 proteins: exploitation of intracellular trafficking pathways.</title>
        <authorList>
            <person name="Windheim M."/>
            <person name="Hilgendorf A."/>
            <person name="Burgert H.G."/>
        </authorList>
    </citation>
    <scope>REVIEW</scope>
</reference>
<feature type="signal peptide" evidence="1">
    <location>
        <begin position="1"/>
        <end position="19"/>
    </location>
</feature>
<feature type="chain" id="PRO_0000036476" description="Early 3 receptor internalization and degradation beta protein">
    <location>
        <begin position="20"/>
        <end position="130"/>
    </location>
</feature>
<feature type="transmembrane region" description="Helical" evidence="2">
    <location>
        <begin position="53"/>
        <end position="77"/>
    </location>
</feature>
<feature type="region of interest" description="Tyrosine-based sorting motif">
    <location>
        <begin position="122"/>
        <end position="125"/>
    </location>
</feature>
<name>E3RDB_ADE02</name>
<sequence>MKRSVIFVLLIFCALPVLCSQTSAPPKRHISCRFTQIWNIPSCYNKQSDLSEAWLYAIISVMVFCSTIFALAIYPYLDIGWNAIDAMNHPTFPVPAVIPLQQVIAPINQPRPPSPTPTEISYFNLTGGDD</sequence>
<organism>
    <name type="scientific">Human adenovirus C serotype 2</name>
    <name type="common">HAdV-2</name>
    <name type="synonym">Human adenovirus 2</name>
    <dbReference type="NCBI Taxonomy" id="10515"/>
    <lineage>
        <taxon>Viruses</taxon>
        <taxon>Varidnaviria</taxon>
        <taxon>Bamfordvirae</taxon>
        <taxon>Preplasmiviricota</taxon>
        <taxon>Tectiliviricetes</taxon>
        <taxon>Rowavirales</taxon>
        <taxon>Adenoviridae</taxon>
        <taxon>Mastadenovirus</taxon>
        <taxon>Human mastadenovirus C</taxon>
    </lineage>
</organism>
<organismHost>
    <name type="scientific">Homo sapiens</name>
    <name type="common">Human</name>
    <dbReference type="NCBI Taxonomy" id="9606"/>
</organismHost>
<evidence type="ECO:0000250" key="1"/>
<evidence type="ECO:0000255" key="2"/>
<evidence type="ECO:0000269" key="3">
    <source>
    </source>
</evidence>
<evidence type="ECO:0000269" key="4">
    <source>
    </source>
</evidence>
<evidence type="ECO:0000269" key="5">
    <source>
    </source>
</evidence>
<evidence type="ECO:0000305" key="6"/>
<accession>P03250</accession>
<protein>
    <recommendedName>
        <fullName>Early 3 receptor internalization and degradation beta protein</fullName>
        <shortName>E3 RID-beta protein</shortName>
    </recommendedName>
    <alternativeName>
        <fullName>Early E3B 14.5 kDa protein</fullName>
        <shortName>E3-14.5k</shortName>
    </alternativeName>
</protein>
<proteinExistence type="evidence at protein level"/>